<comment type="function">
    <text evidence="1">Displays ATPase and GTPase activities.</text>
</comment>
<comment type="similarity">
    <text evidence="1">Belongs to the RapZ-like family.</text>
</comment>
<comment type="sequence caution" evidence="3">
    <conflict type="erroneous initiation">
        <sequence resource="EMBL-CDS" id="CAP55132"/>
    </conflict>
</comment>
<name>Y1189_GLUDA</name>
<organism>
    <name type="scientific">Gluconacetobacter diazotrophicus (strain ATCC 49037 / DSM 5601 / CCUG 37298 / CIP 103539 / LMG 7603 / PAl5)</name>
    <dbReference type="NCBI Taxonomy" id="272568"/>
    <lineage>
        <taxon>Bacteria</taxon>
        <taxon>Pseudomonadati</taxon>
        <taxon>Pseudomonadota</taxon>
        <taxon>Alphaproteobacteria</taxon>
        <taxon>Acetobacterales</taxon>
        <taxon>Acetobacteraceae</taxon>
        <taxon>Gluconacetobacter</taxon>
    </lineage>
</organism>
<feature type="chain" id="PRO_0000383247" description="Nucleotide-binding protein GDI1189/Gdia_1902">
    <location>
        <begin position="1"/>
        <end position="356"/>
    </location>
</feature>
<feature type="region of interest" description="Disordered" evidence="2">
    <location>
        <begin position="285"/>
        <end position="313"/>
    </location>
</feature>
<feature type="binding site" evidence="1">
    <location>
        <begin position="20"/>
        <end position="27"/>
    </location>
    <ligand>
        <name>ATP</name>
        <dbReference type="ChEBI" id="CHEBI:30616"/>
    </ligand>
</feature>
<feature type="binding site" evidence="1">
    <location>
        <begin position="65"/>
        <end position="68"/>
    </location>
    <ligand>
        <name>GTP</name>
        <dbReference type="ChEBI" id="CHEBI:37565"/>
    </ligand>
</feature>
<sequence>MTDSSHDGVPAPRRILLVTGLSGAGKSSILRILEDLGYEVIDNPPLGMMDEIVTRAEQPVAIGVDSRTRGFDAAAVLAALGRLRVNPDLQAELIYATAEESVLLRRYTATRRRHPLAMRGTVKEGIEAEIELTARLRAAADMVIDTSDLPPPELRQVVEMRFAPRHDRMAEGLTVALMSFAFPAGLPREADMVFDARFLRNPYYDPDLSVRNGLDQAVADYVASDPDYPRFLDQIDGMLGLVLPRFVREGKKYATIAIGCSGGRHRSVTLVEALARRLAAKNLAEPGGTCDSPGKPAHIEKGAAPTDVQSGGADAQGAWPIIVMHRELARQGRSSWRWASRPREHAADVVEGQYSS</sequence>
<evidence type="ECO:0000255" key="1">
    <source>
        <dbReference type="HAMAP-Rule" id="MF_00636"/>
    </source>
</evidence>
<evidence type="ECO:0000256" key="2">
    <source>
        <dbReference type="SAM" id="MobiDB-lite"/>
    </source>
</evidence>
<evidence type="ECO:0000305" key="3"/>
<protein>
    <recommendedName>
        <fullName evidence="1">Nucleotide-binding protein GDI1189/Gdia_1902</fullName>
    </recommendedName>
</protein>
<dbReference type="EMBL" id="AM889285">
    <property type="protein sequence ID" value="CAP55132.1"/>
    <property type="status" value="ALT_INIT"/>
    <property type="molecule type" value="Genomic_DNA"/>
</dbReference>
<dbReference type="EMBL" id="CP001189">
    <property type="protein sequence ID" value="ACI51662.1"/>
    <property type="molecule type" value="Genomic_DNA"/>
</dbReference>
<dbReference type="RefSeq" id="WP_012554030.1">
    <property type="nucleotide sequence ID" value="NC_010125.1"/>
</dbReference>
<dbReference type="SMR" id="A9HDQ7"/>
<dbReference type="STRING" id="272568.GDI1189"/>
<dbReference type="KEGG" id="gdi:GDI1189"/>
<dbReference type="KEGG" id="gdj:Gdia_1902"/>
<dbReference type="eggNOG" id="COG1660">
    <property type="taxonomic scope" value="Bacteria"/>
</dbReference>
<dbReference type="HOGENOM" id="CLU_059558_0_0_5"/>
<dbReference type="OrthoDB" id="9784461at2"/>
<dbReference type="Proteomes" id="UP000001176">
    <property type="component" value="Chromosome"/>
</dbReference>
<dbReference type="GO" id="GO:0005524">
    <property type="term" value="F:ATP binding"/>
    <property type="evidence" value="ECO:0007669"/>
    <property type="project" value="UniProtKB-UniRule"/>
</dbReference>
<dbReference type="GO" id="GO:0005525">
    <property type="term" value="F:GTP binding"/>
    <property type="evidence" value="ECO:0007669"/>
    <property type="project" value="UniProtKB-UniRule"/>
</dbReference>
<dbReference type="Gene3D" id="3.40.50.300">
    <property type="entry name" value="P-loop containing nucleotide triphosphate hydrolases"/>
    <property type="match status" value="1"/>
</dbReference>
<dbReference type="HAMAP" id="MF_00636">
    <property type="entry name" value="RapZ_like"/>
    <property type="match status" value="1"/>
</dbReference>
<dbReference type="InterPro" id="IPR027417">
    <property type="entry name" value="P-loop_NTPase"/>
</dbReference>
<dbReference type="InterPro" id="IPR005337">
    <property type="entry name" value="RapZ-like"/>
</dbReference>
<dbReference type="InterPro" id="IPR053930">
    <property type="entry name" value="RapZ-like_N"/>
</dbReference>
<dbReference type="InterPro" id="IPR053931">
    <property type="entry name" value="RapZ_C"/>
</dbReference>
<dbReference type="NCBIfam" id="NF003828">
    <property type="entry name" value="PRK05416.1"/>
    <property type="match status" value="1"/>
</dbReference>
<dbReference type="PANTHER" id="PTHR30448">
    <property type="entry name" value="RNASE ADAPTER PROTEIN RAPZ"/>
    <property type="match status" value="1"/>
</dbReference>
<dbReference type="PANTHER" id="PTHR30448:SF0">
    <property type="entry name" value="RNASE ADAPTER PROTEIN RAPZ"/>
    <property type="match status" value="1"/>
</dbReference>
<dbReference type="Pfam" id="PF22740">
    <property type="entry name" value="PapZ_C"/>
    <property type="match status" value="1"/>
</dbReference>
<dbReference type="Pfam" id="PF03668">
    <property type="entry name" value="RapZ-like_N"/>
    <property type="match status" value="1"/>
</dbReference>
<dbReference type="SUPFAM" id="SSF52540">
    <property type="entry name" value="P-loop containing nucleoside triphosphate hydrolases"/>
    <property type="match status" value="1"/>
</dbReference>
<accession>A9HDQ7</accession>
<accession>B5ZLY5</accession>
<proteinExistence type="inferred from homology"/>
<keyword id="KW-0067">ATP-binding</keyword>
<keyword id="KW-0342">GTP-binding</keyword>
<keyword id="KW-0547">Nucleotide-binding</keyword>
<keyword id="KW-1185">Reference proteome</keyword>
<gene>
    <name type="ordered locus">GDI1189</name>
    <name type="ordered locus">Gdia_1902</name>
</gene>
<reference key="1">
    <citation type="journal article" date="2009" name="BMC Genomics">
        <title>Complete genome sequence of the sugarcane nitrogen-fixing endophyte Gluconacetobacter diazotrophicus Pal5.</title>
        <authorList>
            <person name="Bertalan M."/>
            <person name="Albano R."/>
            <person name="de Padua V."/>
            <person name="Rouws L."/>
            <person name="Rojas C."/>
            <person name="Hemerly A."/>
            <person name="Teixeira K."/>
            <person name="Schwab S."/>
            <person name="Araujo J."/>
            <person name="Oliveira A."/>
            <person name="Franca L."/>
            <person name="Magalhaes V."/>
            <person name="Alqueres S."/>
            <person name="Cardoso A."/>
            <person name="Almeida W."/>
            <person name="Loureiro M.M."/>
            <person name="Nogueira E."/>
            <person name="Cidade D."/>
            <person name="Oliveira D."/>
            <person name="Simao T."/>
            <person name="Macedo J."/>
            <person name="Valadao A."/>
            <person name="Dreschsel M."/>
            <person name="Freitas F."/>
            <person name="Vidal M."/>
            <person name="Guedes H."/>
            <person name="Rodrigues E."/>
            <person name="Meneses C."/>
            <person name="Brioso P."/>
            <person name="Pozzer L."/>
            <person name="Figueiredo D."/>
            <person name="Montano H."/>
            <person name="Junior J."/>
            <person name="de Souza Filho G."/>
            <person name="Martin Quintana Flores V."/>
            <person name="Ferreira B."/>
            <person name="Branco A."/>
            <person name="Gonzalez P."/>
            <person name="Guillobel H."/>
            <person name="Lemos M."/>
            <person name="Seibel L."/>
            <person name="Macedo J."/>
            <person name="Alves-Ferreira M."/>
            <person name="Sachetto-Martins G."/>
            <person name="Coelho A."/>
            <person name="Santos E."/>
            <person name="Amaral G."/>
            <person name="Neves A."/>
            <person name="Pacheco A.B."/>
            <person name="Carvalho D."/>
            <person name="Lery L."/>
            <person name="Bisch P."/>
            <person name="Rossle S.C."/>
            <person name="Urmenyi T."/>
            <person name="Rael Pereira A."/>
            <person name="Silva R."/>
            <person name="Rondinelli E."/>
            <person name="von Kruger W."/>
            <person name="Martins O."/>
            <person name="Baldani J.I."/>
            <person name="Ferreira P.C."/>
        </authorList>
    </citation>
    <scope>NUCLEOTIDE SEQUENCE [LARGE SCALE GENOMIC DNA]</scope>
    <source>
        <strain>ATCC 49037 / DSM 5601 / CCUG 37298 / CIP 103539 / LMG 7603 / PAl5</strain>
    </source>
</reference>
<reference key="2">
    <citation type="journal article" date="2010" name="Stand. Genomic Sci.">
        <title>Two genome sequences of the same bacterial strain, Gluconacetobacter diazotrophicus PAl 5, suggest a new standard in genome sequence submission.</title>
        <authorList>
            <person name="Giongo A."/>
            <person name="Tyler H.L."/>
            <person name="Zipperer U.N."/>
            <person name="Triplett E.W."/>
        </authorList>
    </citation>
    <scope>NUCLEOTIDE SEQUENCE [LARGE SCALE GENOMIC DNA]</scope>
    <source>
        <strain>ATCC 49037 / DSM 5601 / CCUG 37298 / CIP 103539 / LMG 7603 / PAl5</strain>
    </source>
</reference>